<proteinExistence type="inferred from homology"/>
<accession>Q05FR8</accession>
<gene>
    <name evidence="1" type="primary">clpP</name>
    <name type="ordered locus">CRP_072</name>
</gene>
<keyword id="KW-0963">Cytoplasm</keyword>
<keyword id="KW-0378">Hydrolase</keyword>
<keyword id="KW-0645">Protease</keyword>
<keyword id="KW-0720">Serine protease</keyword>
<reference key="1">
    <citation type="journal article" date="2006" name="Science">
        <title>The 160-kilobase genome of the bacterial endosymbiont Carsonella.</title>
        <authorList>
            <person name="Nakabachi A."/>
            <person name="Yamashita A."/>
            <person name="Toh H."/>
            <person name="Ishikawa H."/>
            <person name="Dunbar H.E."/>
            <person name="Moran N.A."/>
            <person name="Hattori M."/>
        </authorList>
    </citation>
    <scope>NUCLEOTIDE SEQUENCE [LARGE SCALE GENOMIC DNA]</scope>
    <source>
        <strain>PV</strain>
    </source>
</reference>
<feature type="chain" id="PRO_1000206143" description="ATP-dependent Clp protease proteolytic subunit">
    <location>
        <begin position="1"/>
        <end position="194"/>
    </location>
</feature>
<feature type="active site" description="Nucleophile" evidence="1">
    <location>
        <position position="97"/>
    </location>
</feature>
<feature type="active site" evidence="1">
    <location>
        <position position="122"/>
    </location>
</feature>
<sequence length="194" mass="21827">MIFLPTVIDKNIKGDRFLDLYSKMLKERVIYLNGAIEDTMASLIVSQLMFLDSENSKDIILYINSPGGVVSSGLSIYDTIQFLKSDVSTICIGQAASMAAVLLAAGKKGKRFCFPNSRIMIHQPLGYAQGQASDVEIHAREMINIKQILCEILSSHTNNSIFQIFKDTDRDNFMNCKQTLKYGIIDNVLYKKWI</sequence>
<organism>
    <name type="scientific">Carsonella ruddii (strain PV)</name>
    <dbReference type="NCBI Taxonomy" id="387662"/>
    <lineage>
        <taxon>Bacteria</taxon>
        <taxon>Pseudomonadati</taxon>
        <taxon>Pseudomonadota</taxon>
        <taxon>Gammaproteobacteria</taxon>
        <taxon>Oceanospirillales</taxon>
        <taxon>Halomonadaceae</taxon>
        <taxon>Zymobacter group</taxon>
        <taxon>Candidatus Carsonella</taxon>
    </lineage>
</organism>
<comment type="function">
    <text evidence="1">Cleaves peptides in various proteins in a process that requires ATP hydrolysis. Has a chymotrypsin-like activity. Plays a major role in the degradation of misfolded proteins.</text>
</comment>
<comment type="catalytic activity">
    <reaction evidence="1">
        <text>Hydrolysis of proteins to small peptides in the presence of ATP and magnesium. alpha-casein is the usual test substrate. In the absence of ATP, only oligopeptides shorter than five residues are hydrolyzed (such as succinyl-Leu-Tyr-|-NHMec, and Leu-Tyr-Leu-|-Tyr-Trp, in which cleavage of the -Tyr-|-Leu- and -Tyr-|-Trp bonds also occurs).</text>
        <dbReference type="EC" id="3.4.21.92"/>
    </reaction>
</comment>
<comment type="subunit">
    <text evidence="1">Fourteen ClpP subunits assemble into 2 heptameric rings which stack back to back to give a disk-like structure with a central cavity, resembling the structure of eukaryotic proteasomes.</text>
</comment>
<comment type="subcellular location">
    <subcellularLocation>
        <location evidence="1">Cytoplasm</location>
    </subcellularLocation>
</comment>
<comment type="similarity">
    <text evidence="1">Belongs to the peptidase S14 family.</text>
</comment>
<evidence type="ECO:0000255" key="1">
    <source>
        <dbReference type="HAMAP-Rule" id="MF_00444"/>
    </source>
</evidence>
<dbReference type="EC" id="3.4.21.92" evidence="1"/>
<dbReference type="EMBL" id="AP009180">
    <property type="protein sequence ID" value="BAF35103.1"/>
    <property type="molecule type" value="Genomic_DNA"/>
</dbReference>
<dbReference type="RefSeq" id="WP_011672295.1">
    <property type="nucleotide sequence ID" value="NC_008512.1"/>
</dbReference>
<dbReference type="SMR" id="Q05FR8"/>
<dbReference type="STRING" id="387662.CRP_072"/>
<dbReference type="MEROPS" id="S14.001"/>
<dbReference type="KEGG" id="crp:CRP_072"/>
<dbReference type="HOGENOM" id="CLU_058707_3_2_6"/>
<dbReference type="OrthoDB" id="9802800at2"/>
<dbReference type="Proteomes" id="UP000000777">
    <property type="component" value="Chromosome"/>
</dbReference>
<dbReference type="GO" id="GO:0005737">
    <property type="term" value="C:cytoplasm"/>
    <property type="evidence" value="ECO:0007669"/>
    <property type="project" value="UniProtKB-SubCell"/>
</dbReference>
<dbReference type="GO" id="GO:0009368">
    <property type="term" value="C:endopeptidase Clp complex"/>
    <property type="evidence" value="ECO:0007669"/>
    <property type="project" value="TreeGrafter"/>
</dbReference>
<dbReference type="GO" id="GO:0004176">
    <property type="term" value="F:ATP-dependent peptidase activity"/>
    <property type="evidence" value="ECO:0007669"/>
    <property type="project" value="InterPro"/>
</dbReference>
<dbReference type="GO" id="GO:0051117">
    <property type="term" value="F:ATPase binding"/>
    <property type="evidence" value="ECO:0007669"/>
    <property type="project" value="TreeGrafter"/>
</dbReference>
<dbReference type="GO" id="GO:0004252">
    <property type="term" value="F:serine-type endopeptidase activity"/>
    <property type="evidence" value="ECO:0007669"/>
    <property type="project" value="UniProtKB-UniRule"/>
</dbReference>
<dbReference type="GO" id="GO:0006515">
    <property type="term" value="P:protein quality control for misfolded or incompletely synthesized proteins"/>
    <property type="evidence" value="ECO:0007669"/>
    <property type="project" value="TreeGrafter"/>
</dbReference>
<dbReference type="CDD" id="cd07017">
    <property type="entry name" value="S14_ClpP_2"/>
    <property type="match status" value="1"/>
</dbReference>
<dbReference type="FunFam" id="3.90.226.10:FF:000001">
    <property type="entry name" value="ATP-dependent Clp protease proteolytic subunit"/>
    <property type="match status" value="1"/>
</dbReference>
<dbReference type="Gene3D" id="3.90.226.10">
    <property type="entry name" value="2-enoyl-CoA Hydratase, Chain A, domain 1"/>
    <property type="match status" value="1"/>
</dbReference>
<dbReference type="HAMAP" id="MF_00444">
    <property type="entry name" value="ClpP"/>
    <property type="match status" value="1"/>
</dbReference>
<dbReference type="InterPro" id="IPR001907">
    <property type="entry name" value="ClpP"/>
</dbReference>
<dbReference type="InterPro" id="IPR029045">
    <property type="entry name" value="ClpP/crotonase-like_dom_sf"/>
</dbReference>
<dbReference type="InterPro" id="IPR023562">
    <property type="entry name" value="ClpP/TepA"/>
</dbReference>
<dbReference type="InterPro" id="IPR033135">
    <property type="entry name" value="ClpP_His_AS"/>
</dbReference>
<dbReference type="InterPro" id="IPR018215">
    <property type="entry name" value="ClpP_Ser_AS"/>
</dbReference>
<dbReference type="NCBIfam" id="NF001368">
    <property type="entry name" value="PRK00277.1"/>
    <property type="match status" value="1"/>
</dbReference>
<dbReference type="NCBIfam" id="NF009205">
    <property type="entry name" value="PRK12553.1"/>
    <property type="match status" value="1"/>
</dbReference>
<dbReference type="PANTHER" id="PTHR10381">
    <property type="entry name" value="ATP-DEPENDENT CLP PROTEASE PROTEOLYTIC SUBUNIT"/>
    <property type="match status" value="1"/>
</dbReference>
<dbReference type="PANTHER" id="PTHR10381:SF70">
    <property type="entry name" value="ATP-DEPENDENT CLP PROTEASE PROTEOLYTIC SUBUNIT"/>
    <property type="match status" value="1"/>
</dbReference>
<dbReference type="Pfam" id="PF00574">
    <property type="entry name" value="CLP_protease"/>
    <property type="match status" value="1"/>
</dbReference>
<dbReference type="PRINTS" id="PR00127">
    <property type="entry name" value="CLPPROTEASEP"/>
</dbReference>
<dbReference type="SUPFAM" id="SSF52096">
    <property type="entry name" value="ClpP/crotonase"/>
    <property type="match status" value="1"/>
</dbReference>
<dbReference type="PROSITE" id="PS00382">
    <property type="entry name" value="CLP_PROTEASE_HIS"/>
    <property type="match status" value="1"/>
</dbReference>
<dbReference type="PROSITE" id="PS00381">
    <property type="entry name" value="CLP_PROTEASE_SER"/>
    <property type="match status" value="1"/>
</dbReference>
<name>CLPP_CARRP</name>
<protein>
    <recommendedName>
        <fullName evidence="1">ATP-dependent Clp protease proteolytic subunit</fullName>
        <ecNumber evidence="1">3.4.21.92</ecNumber>
    </recommendedName>
    <alternativeName>
        <fullName evidence="1">Endopeptidase Clp</fullName>
    </alternativeName>
</protein>